<gene>
    <name type="primary">aglD</name>
    <name type="ORF">AN7152</name>
</gene>
<proteinExistence type="evidence at protein level"/>
<protein>
    <recommendedName>
        <fullName>Alpha-galactosidase D</fullName>
        <ecNumber>3.2.1.22</ecNumber>
    </recommendedName>
    <alternativeName>
        <fullName>Melibiase D</fullName>
    </alternativeName>
</protein>
<dbReference type="EC" id="3.2.1.22"/>
<dbReference type="EMBL" id="DQ490505">
    <property type="protein sequence ID" value="ABF50881.1"/>
    <property type="molecule type" value="mRNA"/>
</dbReference>
<dbReference type="EMBL" id="AACD01000122">
    <property type="protein sequence ID" value="EAA61404.1"/>
    <property type="status" value="ALT_SEQ"/>
    <property type="molecule type" value="Genomic_DNA"/>
</dbReference>
<dbReference type="EMBL" id="BN001304">
    <property type="protein sequence ID" value="CBF78972.1"/>
    <property type="status" value="ALT_SEQ"/>
    <property type="molecule type" value="Genomic_DNA"/>
</dbReference>
<dbReference type="RefSeq" id="XP_664756.1">
    <property type="nucleotide sequence ID" value="XM_659664.1"/>
</dbReference>
<dbReference type="SMR" id="Q5AX28"/>
<dbReference type="STRING" id="227321.Q5AX28"/>
<dbReference type="CAZy" id="CBM35">
    <property type="family name" value="Carbohydrate-Binding Module Family 35"/>
</dbReference>
<dbReference type="CAZy" id="GH27">
    <property type="family name" value="Glycoside Hydrolase Family 27"/>
</dbReference>
<dbReference type="GlyCosmos" id="Q5AX28">
    <property type="glycosylation" value="9 sites, No reported glycans"/>
</dbReference>
<dbReference type="KEGG" id="ani:ANIA_07152"/>
<dbReference type="VEuPathDB" id="FungiDB:AN7152"/>
<dbReference type="eggNOG" id="KOG2366">
    <property type="taxonomic scope" value="Eukaryota"/>
</dbReference>
<dbReference type="HOGENOM" id="CLU_013093_3_0_1"/>
<dbReference type="InParanoid" id="Q5AX28"/>
<dbReference type="OrthoDB" id="5795902at2759"/>
<dbReference type="Proteomes" id="UP000000560">
    <property type="component" value="Chromosome IV"/>
</dbReference>
<dbReference type="GO" id="GO:0005576">
    <property type="term" value="C:extracellular region"/>
    <property type="evidence" value="ECO:0007669"/>
    <property type="project" value="UniProtKB-SubCell"/>
</dbReference>
<dbReference type="GO" id="GO:0004557">
    <property type="term" value="F:alpha-galactosidase activity"/>
    <property type="evidence" value="ECO:0000314"/>
    <property type="project" value="UniProtKB"/>
</dbReference>
<dbReference type="GO" id="GO:0046355">
    <property type="term" value="P:mannan catabolic process"/>
    <property type="evidence" value="ECO:0000314"/>
    <property type="project" value="UniProtKB"/>
</dbReference>
<dbReference type="CDD" id="cd04081">
    <property type="entry name" value="CBM35_galactosidase-like"/>
    <property type="match status" value="1"/>
</dbReference>
<dbReference type="CDD" id="cd14792">
    <property type="entry name" value="GH27"/>
    <property type="match status" value="1"/>
</dbReference>
<dbReference type="FunFam" id="2.60.40.1180:FF:000008">
    <property type="entry name" value="Alpha-galactosidase"/>
    <property type="match status" value="1"/>
</dbReference>
<dbReference type="FunFam" id="3.20.20.70:FF:000197">
    <property type="entry name" value="Alpha-galactosidase"/>
    <property type="match status" value="1"/>
</dbReference>
<dbReference type="Gene3D" id="3.20.20.70">
    <property type="entry name" value="Aldolase class I"/>
    <property type="match status" value="1"/>
</dbReference>
<dbReference type="Gene3D" id="2.60.120.260">
    <property type="entry name" value="Galactose-binding domain-like"/>
    <property type="match status" value="1"/>
</dbReference>
<dbReference type="Gene3D" id="2.60.40.1180">
    <property type="entry name" value="Golgi alpha-mannosidase II"/>
    <property type="match status" value="1"/>
</dbReference>
<dbReference type="InterPro" id="IPR013785">
    <property type="entry name" value="Aldolase_TIM"/>
</dbReference>
<dbReference type="InterPro" id="IPR002241">
    <property type="entry name" value="Glyco_hydro_27"/>
</dbReference>
<dbReference type="InterPro" id="IPR013780">
    <property type="entry name" value="Glyco_hydro_b"/>
</dbReference>
<dbReference type="InterPro" id="IPR017853">
    <property type="entry name" value="Glycoside_hydrolase_SF"/>
</dbReference>
<dbReference type="InterPro" id="IPR041233">
    <property type="entry name" value="Melibiase_C"/>
</dbReference>
<dbReference type="PANTHER" id="PTHR11452:SF75">
    <property type="entry name" value="ALPHA-GALACTOSIDASE MEL1"/>
    <property type="match status" value="1"/>
</dbReference>
<dbReference type="PANTHER" id="PTHR11452">
    <property type="entry name" value="ALPHA-GALACTOSIDASE/ALPHA-N-ACETYLGALACTOSAMINIDASE"/>
    <property type="match status" value="1"/>
</dbReference>
<dbReference type="Pfam" id="PF16499">
    <property type="entry name" value="Melibiase_2"/>
    <property type="match status" value="1"/>
</dbReference>
<dbReference type="Pfam" id="PF17801">
    <property type="entry name" value="Melibiase_C"/>
    <property type="match status" value="1"/>
</dbReference>
<dbReference type="PRINTS" id="PR00740">
    <property type="entry name" value="GLHYDRLASE27"/>
</dbReference>
<dbReference type="SUPFAM" id="SSF51445">
    <property type="entry name" value="(Trans)glycosidases"/>
    <property type="match status" value="1"/>
</dbReference>
<dbReference type="SUPFAM" id="SSF51011">
    <property type="entry name" value="Glycosyl hydrolase domain"/>
    <property type="match status" value="1"/>
</dbReference>
<comment type="function">
    <text evidence="3">Hydrolyzes a variety of simple alpha-D-galactoside as well as more complex molecules such as oligosaccharides and polysaccharides. Active on paranitrophenyl-alpha-galactoside but not on raffinose, locust bean gum and gum guar.</text>
</comment>
<comment type="catalytic activity">
    <reaction>
        <text>Hydrolysis of terminal, non-reducing alpha-D-galactose residues in alpha-D-galactosides, including galactose oligosaccharides, galactomannans and galactolipids.</text>
        <dbReference type="EC" id="3.2.1.22"/>
    </reaction>
</comment>
<comment type="biophysicochemical properties">
    <phDependence>
        <text evidence="3">Optimum pH is 5.0.</text>
    </phDependence>
    <temperatureDependence>
        <text evidence="3">Optimum temperature is 52 degrees Celsius.</text>
    </temperatureDependence>
</comment>
<comment type="subcellular location">
    <subcellularLocation>
        <location evidence="1">Secreted</location>
    </subcellularLocation>
</comment>
<comment type="similarity">
    <text evidence="4">Belongs to the glycosyl hydrolase 27 family.</text>
</comment>
<comment type="sequence caution" evidence="4">
    <conflict type="erroneous gene model prediction">
        <sequence resource="EMBL-CDS" id="CBF78972"/>
    </conflict>
</comment>
<comment type="sequence caution" evidence="4">
    <conflict type="erroneous gene model prediction">
        <sequence resource="EMBL-CDS" id="EAA61404"/>
    </conflict>
</comment>
<organism>
    <name type="scientific">Emericella nidulans (strain FGSC A4 / ATCC 38163 / CBS 112.46 / NRRL 194 / M139)</name>
    <name type="common">Aspergillus nidulans</name>
    <dbReference type="NCBI Taxonomy" id="227321"/>
    <lineage>
        <taxon>Eukaryota</taxon>
        <taxon>Fungi</taxon>
        <taxon>Dikarya</taxon>
        <taxon>Ascomycota</taxon>
        <taxon>Pezizomycotina</taxon>
        <taxon>Eurotiomycetes</taxon>
        <taxon>Eurotiomycetidae</taxon>
        <taxon>Eurotiales</taxon>
        <taxon>Aspergillaceae</taxon>
        <taxon>Aspergillus</taxon>
        <taxon>Aspergillus subgen. Nidulantes</taxon>
    </lineage>
</organism>
<reference key="1">
    <citation type="journal article" date="2006" name="Proc. Natl. Acad. Sci. U.S.A.">
        <title>Development and application of a suite of polysaccharide-degrading enzymes for analyzing plant cell walls.</title>
        <authorList>
            <person name="Bauer S."/>
            <person name="Vasu P."/>
            <person name="Persson S."/>
            <person name="Mort A.J."/>
            <person name="Somerville C.R."/>
        </authorList>
    </citation>
    <scope>NUCLEOTIDE SEQUENCE [MRNA]</scope>
    <scope>FUNCTION</scope>
    <scope>BIOPHYSICOCHEMICAL PROPERTIES</scope>
    <source>
        <strain>FGSC A4 / ATCC 38163 / CBS 112.46 / NRRL 194 / M139</strain>
    </source>
</reference>
<reference key="2">
    <citation type="journal article" date="2005" name="Nature">
        <title>Sequencing of Aspergillus nidulans and comparative analysis with A. fumigatus and A. oryzae.</title>
        <authorList>
            <person name="Galagan J.E."/>
            <person name="Calvo S.E."/>
            <person name="Cuomo C."/>
            <person name="Ma L.-J."/>
            <person name="Wortman J.R."/>
            <person name="Batzoglou S."/>
            <person name="Lee S.-I."/>
            <person name="Bastuerkmen M."/>
            <person name="Spevak C.C."/>
            <person name="Clutterbuck J."/>
            <person name="Kapitonov V."/>
            <person name="Jurka J."/>
            <person name="Scazzocchio C."/>
            <person name="Farman M.L."/>
            <person name="Butler J."/>
            <person name="Purcell S."/>
            <person name="Harris S."/>
            <person name="Braus G.H."/>
            <person name="Draht O."/>
            <person name="Busch S."/>
            <person name="D'Enfert C."/>
            <person name="Bouchier C."/>
            <person name="Goldman G.H."/>
            <person name="Bell-Pedersen D."/>
            <person name="Griffiths-Jones S."/>
            <person name="Doonan J.H."/>
            <person name="Yu J."/>
            <person name="Vienken K."/>
            <person name="Pain A."/>
            <person name="Freitag M."/>
            <person name="Selker E.U."/>
            <person name="Archer D.B."/>
            <person name="Penalva M.A."/>
            <person name="Oakley B.R."/>
            <person name="Momany M."/>
            <person name="Tanaka T."/>
            <person name="Kumagai T."/>
            <person name="Asai K."/>
            <person name="Machida M."/>
            <person name="Nierman W.C."/>
            <person name="Denning D.W."/>
            <person name="Caddick M.X."/>
            <person name="Hynes M."/>
            <person name="Paoletti M."/>
            <person name="Fischer R."/>
            <person name="Miller B.L."/>
            <person name="Dyer P.S."/>
            <person name="Sachs M.S."/>
            <person name="Osmani S.A."/>
            <person name="Birren B.W."/>
        </authorList>
    </citation>
    <scope>NUCLEOTIDE SEQUENCE [LARGE SCALE GENOMIC DNA]</scope>
    <source>
        <strain>FGSC A4 / ATCC 38163 / CBS 112.46 / NRRL 194 / M139</strain>
    </source>
</reference>
<reference key="3">
    <citation type="journal article" date="2009" name="Fungal Genet. Biol.">
        <title>The 2008 update of the Aspergillus nidulans genome annotation: a community effort.</title>
        <authorList>
            <person name="Wortman J.R."/>
            <person name="Gilsenan J.M."/>
            <person name="Joardar V."/>
            <person name="Deegan J."/>
            <person name="Clutterbuck J."/>
            <person name="Andersen M.R."/>
            <person name="Archer D."/>
            <person name="Bencina M."/>
            <person name="Braus G."/>
            <person name="Coutinho P."/>
            <person name="von Dohren H."/>
            <person name="Doonan J."/>
            <person name="Driessen A.J."/>
            <person name="Durek P."/>
            <person name="Espeso E."/>
            <person name="Fekete E."/>
            <person name="Flipphi M."/>
            <person name="Estrada C.G."/>
            <person name="Geysens S."/>
            <person name="Goldman G."/>
            <person name="de Groot P.W."/>
            <person name="Hansen K."/>
            <person name="Harris S.D."/>
            <person name="Heinekamp T."/>
            <person name="Helmstaedt K."/>
            <person name="Henrissat B."/>
            <person name="Hofmann G."/>
            <person name="Homan T."/>
            <person name="Horio T."/>
            <person name="Horiuchi H."/>
            <person name="James S."/>
            <person name="Jones M."/>
            <person name="Karaffa L."/>
            <person name="Karanyi Z."/>
            <person name="Kato M."/>
            <person name="Keller N."/>
            <person name="Kelly D.E."/>
            <person name="Kiel J.A."/>
            <person name="Kim J.M."/>
            <person name="van der Klei I.J."/>
            <person name="Klis F.M."/>
            <person name="Kovalchuk A."/>
            <person name="Krasevec N."/>
            <person name="Kubicek C.P."/>
            <person name="Liu B."/>
            <person name="Maccabe A."/>
            <person name="Meyer V."/>
            <person name="Mirabito P."/>
            <person name="Miskei M."/>
            <person name="Mos M."/>
            <person name="Mullins J."/>
            <person name="Nelson D.R."/>
            <person name="Nielsen J."/>
            <person name="Oakley B.R."/>
            <person name="Osmani S.A."/>
            <person name="Pakula T."/>
            <person name="Paszewski A."/>
            <person name="Paulsen I."/>
            <person name="Pilsyk S."/>
            <person name="Pocsi I."/>
            <person name="Punt P.J."/>
            <person name="Ram A.F."/>
            <person name="Ren Q."/>
            <person name="Robellet X."/>
            <person name="Robson G."/>
            <person name="Seiboth B."/>
            <person name="van Solingen P."/>
            <person name="Specht T."/>
            <person name="Sun J."/>
            <person name="Taheri-Talesh N."/>
            <person name="Takeshita N."/>
            <person name="Ussery D."/>
            <person name="vanKuyk P.A."/>
            <person name="Visser H."/>
            <person name="van de Vondervoort P.J."/>
            <person name="de Vries R.P."/>
            <person name="Walton J."/>
            <person name="Xiang X."/>
            <person name="Xiong Y."/>
            <person name="Zeng A.P."/>
            <person name="Brandt B.W."/>
            <person name="Cornell M.J."/>
            <person name="van den Hondel C.A."/>
            <person name="Visser J."/>
            <person name="Oliver S.G."/>
            <person name="Turner G."/>
        </authorList>
    </citation>
    <scope>GENOME REANNOTATION</scope>
    <source>
        <strain>FGSC A4 / ATCC 38163 / CBS 112.46 / NRRL 194 / M139</strain>
    </source>
</reference>
<accession>Q5AX28</accession>
<accession>C8VD73</accession>
<accession>Q1HFR9</accession>
<sequence>MRALVPMVVAATALASPAPALKPRLDDGLARTPQMGWNTYNQYNCFPNESIVHENAQALVDTGLADLGYRYVTIDCGWGVEDRLPNGTITWNPELFPQGFPAMGQYLHDLGLLFGVYGDSGILLCGSPPNITGSLYYEDIDARTFAEWGADSLKYDNCYSDAATNYPNVNYAPSTSPHPRFANMSRYIQAQDRDILFQVCEWGIDFPALWAPEIGHSWRIGNDIIPHWRSIFRTLNQAVPQTDFAGPGQWPDLDMLLVGLDGVLTVPEEQTHFSLWSILKSPLTIGAAIPGMRAESLEILSNADVIAFNQDALGVSAALRRRWSDEGYEVWSGPLEGGRTIAAVINWRDEDREITLDLPDIGLQYAETLQNVWADETVNGVKTSYSSVVEAHGVMLVQLAETVEEGVYPADVFAATNRDVTTFSDVYAITSSPNFVLNITLTEVTAAATNITIITDSSRRPISTSIPAGSSSISTSVSLIAGSNNTITIRNAPPLSSITLSPPEPTYYTGAQDFTLTSPAGAYTCPDAYCLPAGSKIVDLSTESAATAHINSSTSGSKYLEIDYINNEVAFDSSWGWGANSRNLTIKVNDNNPVRLEVPLSGRHSELFGPGLGWWDSGRLGVLTDGWIKGTNELVLSNEGGEGGFTKYAPDVVGIAVYD</sequence>
<name>AGALD_EMENI</name>
<keyword id="KW-0119">Carbohydrate metabolism</keyword>
<keyword id="KW-1015">Disulfide bond</keyword>
<keyword id="KW-0325">Glycoprotein</keyword>
<keyword id="KW-0326">Glycosidase</keyword>
<keyword id="KW-0378">Hydrolase</keyword>
<keyword id="KW-0624">Polysaccharide degradation</keyword>
<keyword id="KW-1185">Reference proteome</keyword>
<keyword id="KW-0964">Secreted</keyword>
<keyword id="KW-0732">Signal</keyword>
<feature type="signal peptide" evidence="2">
    <location>
        <begin position="1"/>
        <end position="20"/>
    </location>
</feature>
<feature type="chain" id="PRO_0000395075" description="Alpha-galactosidase D">
    <location>
        <begin position="21"/>
        <end position="659"/>
    </location>
</feature>
<feature type="active site" description="Nucleophile" evidence="1">
    <location>
        <position position="156"/>
    </location>
</feature>
<feature type="active site" description="Proton donor" evidence="1">
    <location>
        <position position="223"/>
    </location>
</feature>
<feature type="binding site" evidence="1">
    <location>
        <begin position="201"/>
        <end position="205"/>
    </location>
    <ligand>
        <name>substrate</name>
    </ligand>
</feature>
<feature type="glycosylation site" description="N-linked (GlcNAc...) asparagine" evidence="2">
    <location>
        <position position="48"/>
    </location>
</feature>
<feature type="glycosylation site" description="N-linked (GlcNAc...) asparagine" evidence="2">
    <location>
        <position position="86"/>
    </location>
</feature>
<feature type="glycosylation site" description="N-linked (GlcNAc...) asparagine" evidence="2">
    <location>
        <position position="130"/>
    </location>
</feature>
<feature type="glycosylation site" description="N-linked (GlcNAc...) asparagine" evidence="2">
    <location>
        <position position="183"/>
    </location>
</feature>
<feature type="glycosylation site" description="N-linked (GlcNAc...) asparagine" evidence="2">
    <location>
        <position position="438"/>
    </location>
</feature>
<feature type="glycosylation site" description="N-linked (GlcNAc...) asparagine" evidence="2">
    <location>
        <position position="450"/>
    </location>
</feature>
<feature type="glycosylation site" description="N-linked (GlcNAc...) asparagine" evidence="2">
    <location>
        <position position="484"/>
    </location>
</feature>
<feature type="glycosylation site" description="N-linked (GlcNAc...) asparagine" evidence="2">
    <location>
        <position position="551"/>
    </location>
</feature>
<feature type="glycosylation site" description="N-linked (GlcNAc...) asparagine" evidence="2">
    <location>
        <position position="583"/>
    </location>
</feature>
<feature type="disulfide bond" evidence="1">
    <location>
        <begin position="125"/>
        <end position="158"/>
    </location>
</feature>
<evidence type="ECO:0000250" key="1"/>
<evidence type="ECO:0000255" key="2"/>
<evidence type="ECO:0000269" key="3">
    <source>
    </source>
</evidence>
<evidence type="ECO:0000305" key="4"/>